<gene>
    <name evidence="1" type="primary">atpE</name>
    <name type="ordered locus">BCE33L5010</name>
</gene>
<feature type="chain" id="PRO_0000365846" description="ATP synthase subunit c">
    <location>
        <begin position="1"/>
        <end position="72"/>
    </location>
</feature>
<feature type="transmembrane region" description="Helical" evidence="1">
    <location>
        <begin position="1"/>
        <end position="21"/>
    </location>
</feature>
<feature type="transmembrane region" description="Helical" evidence="1">
    <location>
        <begin position="49"/>
        <end position="69"/>
    </location>
</feature>
<feature type="site" description="Reversibly protonated during proton transport" evidence="1">
    <location>
        <position position="56"/>
    </location>
</feature>
<accession>Q630T8</accession>
<dbReference type="EMBL" id="CP000001">
    <property type="protein sequence ID" value="AAU15270.1"/>
    <property type="molecule type" value="Genomic_DNA"/>
</dbReference>
<dbReference type="RefSeq" id="WP_000052064.1">
    <property type="nucleotide sequence ID" value="NZ_CP009968.1"/>
</dbReference>
<dbReference type="SMR" id="Q630T8"/>
<dbReference type="GeneID" id="93005813"/>
<dbReference type="KEGG" id="bcz:BCE33L5010"/>
<dbReference type="PATRIC" id="fig|288681.22.peg.336"/>
<dbReference type="Proteomes" id="UP000002612">
    <property type="component" value="Chromosome"/>
</dbReference>
<dbReference type="GO" id="GO:0005886">
    <property type="term" value="C:plasma membrane"/>
    <property type="evidence" value="ECO:0007669"/>
    <property type="project" value="UniProtKB-SubCell"/>
</dbReference>
<dbReference type="GO" id="GO:0045259">
    <property type="term" value="C:proton-transporting ATP synthase complex"/>
    <property type="evidence" value="ECO:0007669"/>
    <property type="project" value="UniProtKB-KW"/>
</dbReference>
<dbReference type="GO" id="GO:0033177">
    <property type="term" value="C:proton-transporting two-sector ATPase complex, proton-transporting domain"/>
    <property type="evidence" value="ECO:0007669"/>
    <property type="project" value="InterPro"/>
</dbReference>
<dbReference type="GO" id="GO:0008289">
    <property type="term" value="F:lipid binding"/>
    <property type="evidence" value="ECO:0007669"/>
    <property type="project" value="UniProtKB-KW"/>
</dbReference>
<dbReference type="GO" id="GO:0046933">
    <property type="term" value="F:proton-transporting ATP synthase activity, rotational mechanism"/>
    <property type="evidence" value="ECO:0007669"/>
    <property type="project" value="UniProtKB-UniRule"/>
</dbReference>
<dbReference type="CDD" id="cd18185">
    <property type="entry name" value="ATP-synt_Fo_c_ATPE"/>
    <property type="match status" value="1"/>
</dbReference>
<dbReference type="FunFam" id="1.20.20.10:FF:000004">
    <property type="entry name" value="ATP synthase subunit c"/>
    <property type="match status" value="1"/>
</dbReference>
<dbReference type="Gene3D" id="1.20.20.10">
    <property type="entry name" value="F1F0 ATP synthase subunit C"/>
    <property type="match status" value="1"/>
</dbReference>
<dbReference type="HAMAP" id="MF_01396">
    <property type="entry name" value="ATP_synth_c_bact"/>
    <property type="match status" value="1"/>
</dbReference>
<dbReference type="InterPro" id="IPR005953">
    <property type="entry name" value="ATP_synth_csu_bac/chlpt"/>
</dbReference>
<dbReference type="InterPro" id="IPR000454">
    <property type="entry name" value="ATP_synth_F0_csu"/>
</dbReference>
<dbReference type="InterPro" id="IPR020537">
    <property type="entry name" value="ATP_synth_F0_csu_DDCD_BS"/>
</dbReference>
<dbReference type="InterPro" id="IPR038662">
    <property type="entry name" value="ATP_synth_F0_csu_sf"/>
</dbReference>
<dbReference type="InterPro" id="IPR002379">
    <property type="entry name" value="ATPase_proteolipid_c-like_dom"/>
</dbReference>
<dbReference type="InterPro" id="IPR035921">
    <property type="entry name" value="F/V-ATP_Csub_sf"/>
</dbReference>
<dbReference type="NCBIfam" id="TIGR01260">
    <property type="entry name" value="ATP_synt_c"/>
    <property type="match status" value="1"/>
</dbReference>
<dbReference type="NCBIfam" id="NF005363">
    <property type="entry name" value="PRK06876.1"/>
    <property type="match status" value="1"/>
</dbReference>
<dbReference type="PANTHER" id="PTHR10031">
    <property type="entry name" value="ATP SYNTHASE LIPID-BINDING PROTEIN, MITOCHONDRIAL"/>
    <property type="match status" value="1"/>
</dbReference>
<dbReference type="PANTHER" id="PTHR10031:SF0">
    <property type="entry name" value="ATPASE PROTEIN 9"/>
    <property type="match status" value="1"/>
</dbReference>
<dbReference type="Pfam" id="PF00137">
    <property type="entry name" value="ATP-synt_C"/>
    <property type="match status" value="1"/>
</dbReference>
<dbReference type="PRINTS" id="PR00124">
    <property type="entry name" value="ATPASEC"/>
</dbReference>
<dbReference type="SUPFAM" id="SSF81333">
    <property type="entry name" value="F1F0 ATP synthase subunit C"/>
    <property type="match status" value="1"/>
</dbReference>
<dbReference type="PROSITE" id="PS00605">
    <property type="entry name" value="ATPASE_C"/>
    <property type="match status" value="1"/>
</dbReference>
<name>ATPL_BACCZ</name>
<keyword id="KW-0066">ATP synthesis</keyword>
<keyword id="KW-1003">Cell membrane</keyword>
<keyword id="KW-0138">CF(0)</keyword>
<keyword id="KW-0375">Hydrogen ion transport</keyword>
<keyword id="KW-0406">Ion transport</keyword>
<keyword id="KW-0446">Lipid-binding</keyword>
<keyword id="KW-0472">Membrane</keyword>
<keyword id="KW-0812">Transmembrane</keyword>
<keyword id="KW-1133">Transmembrane helix</keyword>
<keyword id="KW-0813">Transport</keyword>
<protein>
    <recommendedName>
        <fullName evidence="1">ATP synthase subunit c</fullName>
    </recommendedName>
    <alternativeName>
        <fullName evidence="1">ATP synthase F(0) sector subunit c</fullName>
    </alternativeName>
    <alternativeName>
        <fullName evidence="1">F-type ATPase subunit c</fullName>
        <shortName evidence="1">F-ATPase subunit c</shortName>
    </alternativeName>
    <alternativeName>
        <fullName evidence="1">Lipid-binding protein</fullName>
    </alternativeName>
</protein>
<comment type="function">
    <text evidence="1">F(1)F(0) ATP synthase produces ATP from ADP in the presence of a proton or sodium gradient. F-type ATPases consist of two structural domains, F(1) containing the extramembraneous catalytic core and F(0) containing the membrane proton channel, linked together by a central stalk and a peripheral stalk. During catalysis, ATP synthesis in the catalytic domain of F(1) is coupled via a rotary mechanism of the central stalk subunits to proton translocation.</text>
</comment>
<comment type="subunit">
    <text evidence="1">F-type ATPases have 2 components, F(1) - the catalytic core - and F(0) - the membrane proton channel. F(1) has five subunits: alpha(3), beta(3), gamma(1), delta(1), epsilon(1). F(0) has three main subunits: a(1), b(2) and c(10-14). The alpha and beta chains form an alternating ring which encloses part of the gamma chain. F(1) is attached to F(0) by a central stalk formed by the gamma and epsilon chains, while a peripheral stalk is formed by the delta and b chains.</text>
</comment>
<comment type="subcellular location">
    <subcellularLocation>
        <location evidence="1">Cell membrane</location>
        <topology evidence="1">Multi-pass membrane protein</topology>
    </subcellularLocation>
</comment>
<comment type="similarity">
    <text evidence="1">Belongs to the ATPase C chain family.</text>
</comment>
<proteinExistence type="inferred from homology"/>
<organism>
    <name type="scientific">Bacillus cereus (strain ZK / E33L)</name>
    <dbReference type="NCBI Taxonomy" id="288681"/>
    <lineage>
        <taxon>Bacteria</taxon>
        <taxon>Bacillati</taxon>
        <taxon>Bacillota</taxon>
        <taxon>Bacilli</taxon>
        <taxon>Bacillales</taxon>
        <taxon>Bacillaceae</taxon>
        <taxon>Bacillus</taxon>
        <taxon>Bacillus cereus group</taxon>
    </lineage>
</organism>
<sequence>MSLGVIAAAIAIGLSALGAGIGNGLIVSRTIEGVARQPELKGALQTIMFIGVALVEALPIIGVVIAFIVMNK</sequence>
<evidence type="ECO:0000255" key="1">
    <source>
        <dbReference type="HAMAP-Rule" id="MF_01396"/>
    </source>
</evidence>
<reference key="1">
    <citation type="journal article" date="2006" name="J. Bacteriol.">
        <title>Pathogenomic sequence analysis of Bacillus cereus and Bacillus thuringiensis isolates closely related to Bacillus anthracis.</title>
        <authorList>
            <person name="Han C.S."/>
            <person name="Xie G."/>
            <person name="Challacombe J.F."/>
            <person name="Altherr M.R."/>
            <person name="Bhotika S.S."/>
            <person name="Bruce D."/>
            <person name="Campbell C.S."/>
            <person name="Campbell M.L."/>
            <person name="Chen J."/>
            <person name="Chertkov O."/>
            <person name="Cleland C."/>
            <person name="Dimitrijevic M."/>
            <person name="Doggett N.A."/>
            <person name="Fawcett J.J."/>
            <person name="Glavina T."/>
            <person name="Goodwin L.A."/>
            <person name="Hill K.K."/>
            <person name="Hitchcock P."/>
            <person name="Jackson P.J."/>
            <person name="Keim P."/>
            <person name="Kewalramani A.R."/>
            <person name="Longmire J."/>
            <person name="Lucas S."/>
            <person name="Malfatti S."/>
            <person name="McMurry K."/>
            <person name="Meincke L.J."/>
            <person name="Misra M."/>
            <person name="Moseman B.L."/>
            <person name="Mundt M."/>
            <person name="Munk A.C."/>
            <person name="Okinaka R.T."/>
            <person name="Parson-Quintana B."/>
            <person name="Reilly L.P."/>
            <person name="Richardson P."/>
            <person name="Robinson D.L."/>
            <person name="Rubin E."/>
            <person name="Saunders E."/>
            <person name="Tapia R."/>
            <person name="Tesmer J.G."/>
            <person name="Thayer N."/>
            <person name="Thompson L.S."/>
            <person name="Tice H."/>
            <person name="Ticknor L.O."/>
            <person name="Wills P.L."/>
            <person name="Brettin T.S."/>
            <person name="Gilna P."/>
        </authorList>
    </citation>
    <scope>NUCLEOTIDE SEQUENCE [LARGE SCALE GENOMIC DNA]</scope>
    <source>
        <strain>ZK / E33L</strain>
    </source>
</reference>